<reference key="1">
    <citation type="journal article" date="2003" name="J. Bacteriol.">
        <title>Complete genome sequence of the oral pathogenic bacterium Porphyromonas gingivalis strain W83.</title>
        <authorList>
            <person name="Nelson K.E."/>
            <person name="Fleischmann R.D."/>
            <person name="DeBoy R.T."/>
            <person name="Paulsen I.T."/>
            <person name="Fouts D.E."/>
            <person name="Eisen J.A."/>
            <person name="Daugherty S.C."/>
            <person name="Dodson R.J."/>
            <person name="Durkin A.S."/>
            <person name="Gwinn M.L."/>
            <person name="Haft D.H."/>
            <person name="Kolonay J.F."/>
            <person name="Nelson W.C."/>
            <person name="Mason T.M."/>
            <person name="Tallon L."/>
            <person name="Gray J."/>
            <person name="Granger D."/>
            <person name="Tettelin H."/>
            <person name="Dong H."/>
            <person name="Galvin J.L."/>
            <person name="Duncan M.J."/>
            <person name="Dewhirst F.E."/>
            <person name="Fraser C.M."/>
        </authorList>
    </citation>
    <scope>NUCLEOTIDE SEQUENCE [LARGE SCALE GENOMIC DNA]</scope>
    <source>
        <strain>ATCC BAA-308 / W83</strain>
    </source>
</reference>
<comment type="function">
    <text evidence="1">Essential for recycling GMP and indirectly, cGMP.</text>
</comment>
<comment type="catalytic activity">
    <reaction evidence="1">
        <text>GMP + ATP = GDP + ADP</text>
        <dbReference type="Rhea" id="RHEA:20780"/>
        <dbReference type="ChEBI" id="CHEBI:30616"/>
        <dbReference type="ChEBI" id="CHEBI:58115"/>
        <dbReference type="ChEBI" id="CHEBI:58189"/>
        <dbReference type="ChEBI" id="CHEBI:456216"/>
        <dbReference type="EC" id="2.7.4.8"/>
    </reaction>
</comment>
<comment type="subcellular location">
    <subcellularLocation>
        <location evidence="1">Cytoplasm</location>
    </subcellularLocation>
</comment>
<comment type="similarity">
    <text evidence="1">Belongs to the guanylate kinase family.</text>
</comment>
<protein>
    <recommendedName>
        <fullName evidence="1">Guanylate kinase</fullName>
        <ecNumber evidence="1">2.7.4.8</ecNumber>
    </recommendedName>
    <alternativeName>
        <fullName evidence="1">GMP kinase</fullName>
    </alternativeName>
</protein>
<sequence length="188" mass="21849">MTKLIIISAPSGTGKSTVIERLLTDRELNLHFSISATSRAPRGEEQNGREYYFLSPEEFRRRIEANEFVEYEEVYRDKYYGTLKSEVERILKEEKNVIFDVDVVGAQSIKKYYGDRALAIFILPPSIEELRSRLQKRGTDSMETIKQRVDKAEKEIGYAHLFDLRFVNDDLVTCVEQIRKAIAQFIAK</sequence>
<name>KGUA_PORGI</name>
<proteinExistence type="inferred from homology"/>
<gene>
    <name evidence="1" type="primary">gmk</name>
    <name type="ordered locus">PG_0512</name>
</gene>
<evidence type="ECO:0000255" key="1">
    <source>
        <dbReference type="HAMAP-Rule" id="MF_00328"/>
    </source>
</evidence>
<organism>
    <name type="scientific">Porphyromonas gingivalis (strain ATCC BAA-308 / W83)</name>
    <dbReference type="NCBI Taxonomy" id="242619"/>
    <lineage>
        <taxon>Bacteria</taxon>
        <taxon>Pseudomonadati</taxon>
        <taxon>Bacteroidota</taxon>
        <taxon>Bacteroidia</taxon>
        <taxon>Bacteroidales</taxon>
        <taxon>Porphyromonadaceae</taxon>
        <taxon>Porphyromonas</taxon>
    </lineage>
</organism>
<feature type="chain" id="PRO_0000170582" description="Guanylate kinase">
    <location>
        <begin position="1"/>
        <end position="188"/>
    </location>
</feature>
<feature type="domain" description="Guanylate kinase-like" evidence="1">
    <location>
        <begin position="2"/>
        <end position="183"/>
    </location>
</feature>
<feature type="binding site" evidence="1">
    <location>
        <begin position="9"/>
        <end position="16"/>
    </location>
    <ligand>
        <name>ATP</name>
        <dbReference type="ChEBI" id="CHEBI:30616"/>
    </ligand>
</feature>
<dbReference type="EC" id="2.7.4.8" evidence="1"/>
<dbReference type="EMBL" id="AE015924">
    <property type="protein sequence ID" value="AAQ65706.1"/>
    <property type="molecule type" value="Genomic_DNA"/>
</dbReference>
<dbReference type="RefSeq" id="WP_004585052.1">
    <property type="nucleotide sequence ID" value="NC_002950.2"/>
</dbReference>
<dbReference type="SMR" id="Q7MWS7"/>
<dbReference type="STRING" id="242619.PG_0512"/>
<dbReference type="EnsemblBacteria" id="AAQ65706">
    <property type="protein sequence ID" value="AAQ65706"/>
    <property type="gene ID" value="PG_0512"/>
</dbReference>
<dbReference type="KEGG" id="pgi:PG_0512"/>
<dbReference type="eggNOG" id="COG0194">
    <property type="taxonomic scope" value="Bacteria"/>
</dbReference>
<dbReference type="HOGENOM" id="CLU_001715_1_1_10"/>
<dbReference type="Proteomes" id="UP000000588">
    <property type="component" value="Chromosome"/>
</dbReference>
<dbReference type="GO" id="GO:0005829">
    <property type="term" value="C:cytosol"/>
    <property type="evidence" value="ECO:0007669"/>
    <property type="project" value="TreeGrafter"/>
</dbReference>
<dbReference type="GO" id="GO:0005524">
    <property type="term" value="F:ATP binding"/>
    <property type="evidence" value="ECO:0007669"/>
    <property type="project" value="UniProtKB-UniRule"/>
</dbReference>
<dbReference type="GO" id="GO:0004385">
    <property type="term" value="F:guanylate kinase activity"/>
    <property type="evidence" value="ECO:0007669"/>
    <property type="project" value="UniProtKB-UniRule"/>
</dbReference>
<dbReference type="CDD" id="cd00071">
    <property type="entry name" value="GMPK"/>
    <property type="match status" value="1"/>
</dbReference>
<dbReference type="FunFam" id="3.30.63.10:FF:000005">
    <property type="entry name" value="Guanylate kinase"/>
    <property type="match status" value="1"/>
</dbReference>
<dbReference type="Gene3D" id="3.30.63.10">
    <property type="entry name" value="Guanylate Kinase phosphate binding domain"/>
    <property type="match status" value="1"/>
</dbReference>
<dbReference type="Gene3D" id="3.40.50.300">
    <property type="entry name" value="P-loop containing nucleotide triphosphate hydrolases"/>
    <property type="match status" value="1"/>
</dbReference>
<dbReference type="HAMAP" id="MF_00328">
    <property type="entry name" value="Guanylate_kinase"/>
    <property type="match status" value="1"/>
</dbReference>
<dbReference type="InterPro" id="IPR008145">
    <property type="entry name" value="GK/Ca_channel_bsu"/>
</dbReference>
<dbReference type="InterPro" id="IPR008144">
    <property type="entry name" value="Guanylate_kin-like_dom"/>
</dbReference>
<dbReference type="InterPro" id="IPR017665">
    <property type="entry name" value="Guanylate_kinase"/>
</dbReference>
<dbReference type="InterPro" id="IPR020590">
    <property type="entry name" value="Guanylate_kinase_CS"/>
</dbReference>
<dbReference type="InterPro" id="IPR027417">
    <property type="entry name" value="P-loop_NTPase"/>
</dbReference>
<dbReference type="NCBIfam" id="TIGR03263">
    <property type="entry name" value="guanyl_kin"/>
    <property type="match status" value="1"/>
</dbReference>
<dbReference type="PANTHER" id="PTHR23117:SF13">
    <property type="entry name" value="GUANYLATE KINASE"/>
    <property type="match status" value="1"/>
</dbReference>
<dbReference type="PANTHER" id="PTHR23117">
    <property type="entry name" value="GUANYLATE KINASE-RELATED"/>
    <property type="match status" value="1"/>
</dbReference>
<dbReference type="Pfam" id="PF00625">
    <property type="entry name" value="Guanylate_kin"/>
    <property type="match status" value="1"/>
</dbReference>
<dbReference type="SMART" id="SM00072">
    <property type="entry name" value="GuKc"/>
    <property type="match status" value="1"/>
</dbReference>
<dbReference type="SUPFAM" id="SSF52540">
    <property type="entry name" value="P-loop containing nucleoside triphosphate hydrolases"/>
    <property type="match status" value="1"/>
</dbReference>
<dbReference type="PROSITE" id="PS00856">
    <property type="entry name" value="GUANYLATE_KINASE_1"/>
    <property type="match status" value="1"/>
</dbReference>
<dbReference type="PROSITE" id="PS50052">
    <property type="entry name" value="GUANYLATE_KINASE_2"/>
    <property type="match status" value="1"/>
</dbReference>
<accession>Q7MWS7</accession>
<keyword id="KW-0067">ATP-binding</keyword>
<keyword id="KW-0963">Cytoplasm</keyword>
<keyword id="KW-0418">Kinase</keyword>
<keyword id="KW-0547">Nucleotide-binding</keyword>
<keyword id="KW-1185">Reference proteome</keyword>
<keyword id="KW-0808">Transferase</keyword>